<comment type="function">
    <text evidence="1">Involved in the biosynthesis of branched-chain amino acids (BCAA). Catalyzes an alkyl-migration followed by a ketol-acid reduction of (S)-2-acetolactate (S2AL) to yield (R)-2,3-dihydroxy-isovalerate. In the isomerase reaction, S2AL is rearranged via a Mg-dependent methyl migration to produce 3-hydroxy-3-methyl-2-ketobutyrate (HMKB). In the reductase reaction, this 2-ketoacid undergoes a metal-dependent reduction by NADPH to yield (R)-2,3-dihydroxy-isovalerate.</text>
</comment>
<comment type="catalytic activity">
    <reaction evidence="1">
        <text>(2R)-2,3-dihydroxy-3-methylbutanoate + NADP(+) = (2S)-2-acetolactate + NADPH + H(+)</text>
        <dbReference type="Rhea" id="RHEA:22068"/>
        <dbReference type="ChEBI" id="CHEBI:15378"/>
        <dbReference type="ChEBI" id="CHEBI:49072"/>
        <dbReference type="ChEBI" id="CHEBI:57783"/>
        <dbReference type="ChEBI" id="CHEBI:58349"/>
        <dbReference type="ChEBI" id="CHEBI:58476"/>
        <dbReference type="EC" id="1.1.1.86"/>
    </reaction>
</comment>
<comment type="catalytic activity">
    <reaction evidence="1">
        <text>(2R,3R)-2,3-dihydroxy-3-methylpentanoate + NADP(+) = (S)-2-ethyl-2-hydroxy-3-oxobutanoate + NADPH + H(+)</text>
        <dbReference type="Rhea" id="RHEA:13493"/>
        <dbReference type="ChEBI" id="CHEBI:15378"/>
        <dbReference type="ChEBI" id="CHEBI:49256"/>
        <dbReference type="ChEBI" id="CHEBI:49258"/>
        <dbReference type="ChEBI" id="CHEBI:57783"/>
        <dbReference type="ChEBI" id="CHEBI:58349"/>
        <dbReference type="EC" id="1.1.1.86"/>
    </reaction>
</comment>
<comment type="cofactor">
    <cofactor evidence="1">
        <name>Mg(2+)</name>
        <dbReference type="ChEBI" id="CHEBI:18420"/>
    </cofactor>
    <text evidence="1">Binds 2 magnesium ions per subunit.</text>
</comment>
<comment type="pathway">
    <text evidence="1">Amino-acid biosynthesis; L-isoleucine biosynthesis; L-isoleucine from 2-oxobutanoate: step 2/4.</text>
</comment>
<comment type="pathway">
    <text evidence="1">Amino-acid biosynthesis; L-valine biosynthesis; L-valine from pyruvate: step 2/4.</text>
</comment>
<comment type="similarity">
    <text evidence="1">Belongs to the ketol-acid reductoisomerase family.</text>
</comment>
<evidence type="ECO:0000255" key="1">
    <source>
        <dbReference type="HAMAP-Rule" id="MF_00435"/>
    </source>
</evidence>
<evidence type="ECO:0000255" key="2">
    <source>
        <dbReference type="PROSITE-ProRule" id="PRU01197"/>
    </source>
</evidence>
<evidence type="ECO:0000255" key="3">
    <source>
        <dbReference type="PROSITE-ProRule" id="PRU01198"/>
    </source>
</evidence>
<organism>
    <name type="scientific">Prochlorococcus marinus (strain MIT 9515)</name>
    <dbReference type="NCBI Taxonomy" id="167542"/>
    <lineage>
        <taxon>Bacteria</taxon>
        <taxon>Bacillati</taxon>
        <taxon>Cyanobacteriota</taxon>
        <taxon>Cyanophyceae</taxon>
        <taxon>Synechococcales</taxon>
        <taxon>Prochlorococcaceae</taxon>
        <taxon>Prochlorococcus</taxon>
    </lineage>
</organism>
<protein>
    <recommendedName>
        <fullName evidence="1">Ketol-acid reductoisomerase (NADP(+))</fullName>
        <shortName evidence="1">KARI</shortName>
        <ecNumber evidence="1">1.1.1.86</ecNumber>
    </recommendedName>
    <alternativeName>
        <fullName evidence="1">Acetohydroxy-acid isomeroreductase</fullName>
        <shortName evidence="1">AHIR</shortName>
    </alternativeName>
    <alternativeName>
        <fullName evidence="1">Alpha-keto-beta-hydroxylacyl reductoisomerase</fullName>
    </alternativeName>
    <alternativeName>
        <fullName evidence="1">Ketol-acid reductoisomerase type 1</fullName>
    </alternativeName>
    <alternativeName>
        <fullName evidence="1">Ketol-acid reductoisomerase type I</fullName>
    </alternativeName>
</protein>
<reference key="1">
    <citation type="journal article" date="2007" name="PLoS Genet.">
        <title>Patterns and implications of gene gain and loss in the evolution of Prochlorococcus.</title>
        <authorList>
            <person name="Kettler G.C."/>
            <person name="Martiny A.C."/>
            <person name="Huang K."/>
            <person name="Zucker J."/>
            <person name="Coleman M.L."/>
            <person name="Rodrigue S."/>
            <person name="Chen F."/>
            <person name="Lapidus A."/>
            <person name="Ferriera S."/>
            <person name="Johnson J."/>
            <person name="Steglich C."/>
            <person name="Church G.M."/>
            <person name="Richardson P."/>
            <person name="Chisholm S.W."/>
        </authorList>
    </citation>
    <scope>NUCLEOTIDE SEQUENCE [LARGE SCALE GENOMIC DNA]</scope>
    <source>
        <strain>MIT 9515</strain>
    </source>
</reference>
<proteinExistence type="inferred from homology"/>
<gene>
    <name evidence="1" type="primary">ilvC</name>
    <name type="ordered locus">P9515_14761</name>
</gene>
<name>ILVC_PROM5</name>
<feature type="chain" id="PRO_1000050556" description="Ketol-acid reductoisomerase (NADP(+))">
    <location>
        <begin position="1"/>
        <end position="329"/>
    </location>
</feature>
<feature type="domain" description="KARI N-terminal Rossmann" evidence="2">
    <location>
        <begin position="2"/>
        <end position="182"/>
    </location>
</feature>
<feature type="domain" description="KARI C-terminal knotted" evidence="3">
    <location>
        <begin position="183"/>
        <end position="328"/>
    </location>
</feature>
<feature type="active site" evidence="1">
    <location>
        <position position="108"/>
    </location>
</feature>
<feature type="binding site" evidence="1">
    <location>
        <begin position="25"/>
        <end position="28"/>
    </location>
    <ligand>
        <name>NADP(+)</name>
        <dbReference type="ChEBI" id="CHEBI:58349"/>
    </ligand>
</feature>
<feature type="binding site" evidence="1">
    <location>
        <position position="51"/>
    </location>
    <ligand>
        <name>NADP(+)</name>
        <dbReference type="ChEBI" id="CHEBI:58349"/>
    </ligand>
</feature>
<feature type="binding site" evidence="1">
    <location>
        <position position="53"/>
    </location>
    <ligand>
        <name>NADP(+)</name>
        <dbReference type="ChEBI" id="CHEBI:58349"/>
    </ligand>
</feature>
<feature type="binding site" evidence="1">
    <location>
        <begin position="83"/>
        <end position="86"/>
    </location>
    <ligand>
        <name>NADP(+)</name>
        <dbReference type="ChEBI" id="CHEBI:58349"/>
    </ligand>
</feature>
<feature type="binding site" evidence="1">
    <location>
        <position position="134"/>
    </location>
    <ligand>
        <name>NADP(+)</name>
        <dbReference type="ChEBI" id="CHEBI:58349"/>
    </ligand>
</feature>
<feature type="binding site" evidence="1">
    <location>
        <position position="191"/>
    </location>
    <ligand>
        <name>Mg(2+)</name>
        <dbReference type="ChEBI" id="CHEBI:18420"/>
        <label>1</label>
    </ligand>
</feature>
<feature type="binding site" evidence="1">
    <location>
        <position position="191"/>
    </location>
    <ligand>
        <name>Mg(2+)</name>
        <dbReference type="ChEBI" id="CHEBI:18420"/>
        <label>2</label>
    </ligand>
</feature>
<feature type="binding site" evidence="1">
    <location>
        <position position="195"/>
    </location>
    <ligand>
        <name>Mg(2+)</name>
        <dbReference type="ChEBI" id="CHEBI:18420"/>
        <label>1</label>
    </ligand>
</feature>
<feature type="binding site" evidence="1">
    <location>
        <position position="227"/>
    </location>
    <ligand>
        <name>Mg(2+)</name>
        <dbReference type="ChEBI" id="CHEBI:18420"/>
        <label>2</label>
    </ligand>
</feature>
<feature type="binding site" evidence="1">
    <location>
        <position position="231"/>
    </location>
    <ligand>
        <name>Mg(2+)</name>
        <dbReference type="ChEBI" id="CHEBI:18420"/>
        <label>2</label>
    </ligand>
</feature>
<feature type="binding site" evidence="1">
    <location>
        <position position="252"/>
    </location>
    <ligand>
        <name>substrate</name>
    </ligand>
</feature>
<keyword id="KW-0028">Amino-acid biosynthesis</keyword>
<keyword id="KW-0100">Branched-chain amino acid biosynthesis</keyword>
<keyword id="KW-0460">Magnesium</keyword>
<keyword id="KW-0479">Metal-binding</keyword>
<keyword id="KW-0521">NADP</keyword>
<keyword id="KW-0560">Oxidoreductase</keyword>
<sequence length="329" mass="36504">MTQLFYDTDADLSLLNNKTIAIIGYGSQGHAHALNLKDSGMDVIVGLYKGSKSESKAINDGLEVFTVSEACEKADWIMILLPDEFQKDVYIKEIEPNLKEGKILSFAHGFNIRFGLIKPPSFVDVVMIAPKGPGHTVRWEYQNGQGVPALFAVEQDYSSNARSLAMAYAKGIGGTRAGILETNFKEETETDLFGEQAVLCGGLSELVKSGFETLVEAGYQPELAYFECLHEVKLIVDLMVKGGLSQMRDSISNTAEYGDYVSGKRLINSDTKKEMQKILKDIQDGTFAKNFVEECDRDKPLMTKLRAENSQHEIEKVGKGLRAMFSWLK</sequence>
<dbReference type="EC" id="1.1.1.86" evidence="1"/>
<dbReference type="EMBL" id="CP000552">
    <property type="protein sequence ID" value="ABM72683.1"/>
    <property type="molecule type" value="Genomic_DNA"/>
</dbReference>
<dbReference type="RefSeq" id="WP_011820780.1">
    <property type="nucleotide sequence ID" value="NC_008817.1"/>
</dbReference>
<dbReference type="SMR" id="A2BY22"/>
<dbReference type="STRING" id="167542.P9515_14761"/>
<dbReference type="GeneID" id="60201099"/>
<dbReference type="KEGG" id="pmc:P9515_14761"/>
<dbReference type="eggNOG" id="COG0059">
    <property type="taxonomic scope" value="Bacteria"/>
</dbReference>
<dbReference type="HOGENOM" id="CLU_033821_0_1_3"/>
<dbReference type="OrthoDB" id="9804088at2"/>
<dbReference type="UniPathway" id="UPA00047">
    <property type="reaction ID" value="UER00056"/>
</dbReference>
<dbReference type="UniPathway" id="UPA00049">
    <property type="reaction ID" value="UER00060"/>
</dbReference>
<dbReference type="Proteomes" id="UP000001589">
    <property type="component" value="Chromosome"/>
</dbReference>
<dbReference type="GO" id="GO:0005829">
    <property type="term" value="C:cytosol"/>
    <property type="evidence" value="ECO:0007669"/>
    <property type="project" value="TreeGrafter"/>
</dbReference>
<dbReference type="GO" id="GO:0004455">
    <property type="term" value="F:ketol-acid reductoisomerase activity"/>
    <property type="evidence" value="ECO:0007669"/>
    <property type="project" value="UniProtKB-UniRule"/>
</dbReference>
<dbReference type="GO" id="GO:0000287">
    <property type="term" value="F:magnesium ion binding"/>
    <property type="evidence" value="ECO:0007669"/>
    <property type="project" value="UniProtKB-UniRule"/>
</dbReference>
<dbReference type="GO" id="GO:0050661">
    <property type="term" value="F:NADP binding"/>
    <property type="evidence" value="ECO:0007669"/>
    <property type="project" value="InterPro"/>
</dbReference>
<dbReference type="GO" id="GO:0009097">
    <property type="term" value="P:isoleucine biosynthetic process"/>
    <property type="evidence" value="ECO:0007669"/>
    <property type="project" value="UniProtKB-UniRule"/>
</dbReference>
<dbReference type="GO" id="GO:0009099">
    <property type="term" value="P:L-valine biosynthetic process"/>
    <property type="evidence" value="ECO:0007669"/>
    <property type="project" value="UniProtKB-UniRule"/>
</dbReference>
<dbReference type="FunFam" id="3.40.50.720:FF:000023">
    <property type="entry name" value="Ketol-acid reductoisomerase (NADP(+))"/>
    <property type="match status" value="1"/>
</dbReference>
<dbReference type="Gene3D" id="6.10.240.10">
    <property type="match status" value="1"/>
</dbReference>
<dbReference type="Gene3D" id="3.40.50.720">
    <property type="entry name" value="NAD(P)-binding Rossmann-like Domain"/>
    <property type="match status" value="1"/>
</dbReference>
<dbReference type="HAMAP" id="MF_00435">
    <property type="entry name" value="IlvC"/>
    <property type="match status" value="1"/>
</dbReference>
<dbReference type="InterPro" id="IPR008927">
    <property type="entry name" value="6-PGluconate_DH-like_C_sf"/>
</dbReference>
<dbReference type="InterPro" id="IPR013023">
    <property type="entry name" value="KARI"/>
</dbReference>
<dbReference type="InterPro" id="IPR000506">
    <property type="entry name" value="KARI_C"/>
</dbReference>
<dbReference type="InterPro" id="IPR013116">
    <property type="entry name" value="KARI_N"/>
</dbReference>
<dbReference type="InterPro" id="IPR014359">
    <property type="entry name" value="KARI_prok"/>
</dbReference>
<dbReference type="InterPro" id="IPR036291">
    <property type="entry name" value="NAD(P)-bd_dom_sf"/>
</dbReference>
<dbReference type="NCBIfam" id="TIGR00465">
    <property type="entry name" value="ilvC"/>
    <property type="match status" value="1"/>
</dbReference>
<dbReference type="NCBIfam" id="NF004017">
    <property type="entry name" value="PRK05479.1"/>
    <property type="match status" value="1"/>
</dbReference>
<dbReference type="NCBIfam" id="NF009940">
    <property type="entry name" value="PRK13403.1"/>
    <property type="match status" value="1"/>
</dbReference>
<dbReference type="PANTHER" id="PTHR21371">
    <property type="entry name" value="KETOL-ACID REDUCTOISOMERASE, MITOCHONDRIAL"/>
    <property type="match status" value="1"/>
</dbReference>
<dbReference type="PANTHER" id="PTHR21371:SF1">
    <property type="entry name" value="KETOL-ACID REDUCTOISOMERASE, MITOCHONDRIAL"/>
    <property type="match status" value="1"/>
</dbReference>
<dbReference type="Pfam" id="PF01450">
    <property type="entry name" value="KARI_C"/>
    <property type="match status" value="1"/>
</dbReference>
<dbReference type="Pfam" id="PF07991">
    <property type="entry name" value="KARI_N"/>
    <property type="match status" value="1"/>
</dbReference>
<dbReference type="PIRSF" id="PIRSF000116">
    <property type="entry name" value="IlvC_gammaproteo"/>
    <property type="match status" value="1"/>
</dbReference>
<dbReference type="SUPFAM" id="SSF48179">
    <property type="entry name" value="6-phosphogluconate dehydrogenase C-terminal domain-like"/>
    <property type="match status" value="1"/>
</dbReference>
<dbReference type="SUPFAM" id="SSF51735">
    <property type="entry name" value="NAD(P)-binding Rossmann-fold domains"/>
    <property type="match status" value="1"/>
</dbReference>
<dbReference type="PROSITE" id="PS51851">
    <property type="entry name" value="KARI_C"/>
    <property type="match status" value="1"/>
</dbReference>
<dbReference type="PROSITE" id="PS51850">
    <property type="entry name" value="KARI_N"/>
    <property type="match status" value="1"/>
</dbReference>
<accession>A2BY22</accession>